<feature type="chain" id="PRO_0000303575" description="tRNA N6-adenosine threonylcarbamoyltransferase">
    <location>
        <begin position="1"/>
        <end position="336"/>
    </location>
</feature>
<feature type="binding site" evidence="1">
    <location>
        <position position="115"/>
    </location>
    <ligand>
        <name>Fe cation</name>
        <dbReference type="ChEBI" id="CHEBI:24875"/>
    </ligand>
</feature>
<feature type="binding site" evidence="1">
    <location>
        <position position="119"/>
    </location>
    <ligand>
        <name>Fe cation</name>
        <dbReference type="ChEBI" id="CHEBI:24875"/>
    </ligand>
</feature>
<feature type="binding site" evidence="1">
    <location>
        <begin position="137"/>
        <end position="141"/>
    </location>
    <ligand>
        <name>substrate</name>
    </ligand>
</feature>
<feature type="binding site" evidence="1">
    <location>
        <position position="170"/>
    </location>
    <ligand>
        <name>substrate</name>
    </ligand>
</feature>
<feature type="binding site" evidence="1">
    <location>
        <position position="183"/>
    </location>
    <ligand>
        <name>substrate</name>
    </ligand>
</feature>
<feature type="binding site" evidence="1">
    <location>
        <position position="187"/>
    </location>
    <ligand>
        <name>substrate</name>
    </ligand>
</feature>
<feature type="binding site" evidence="1">
    <location>
        <position position="276"/>
    </location>
    <ligand>
        <name>substrate</name>
    </ligand>
</feature>
<feature type="binding site" evidence="1">
    <location>
        <position position="302"/>
    </location>
    <ligand>
        <name>Fe cation</name>
        <dbReference type="ChEBI" id="CHEBI:24875"/>
    </ligand>
</feature>
<comment type="function">
    <text evidence="1">Required for the formation of a threonylcarbamoyl group on adenosine at position 37 (t(6)A37) in tRNAs that read codons beginning with adenine. Is involved in the transfer of the threonylcarbamoyl moiety of threonylcarbamoyl-AMP (TC-AMP) to the N6 group of A37, together with TsaE and TsaB. TsaD likely plays a direct catalytic role in this reaction.</text>
</comment>
<comment type="catalytic activity">
    <reaction evidence="1">
        <text>L-threonylcarbamoyladenylate + adenosine(37) in tRNA = N(6)-L-threonylcarbamoyladenosine(37) in tRNA + AMP + H(+)</text>
        <dbReference type="Rhea" id="RHEA:37059"/>
        <dbReference type="Rhea" id="RHEA-COMP:10162"/>
        <dbReference type="Rhea" id="RHEA-COMP:10163"/>
        <dbReference type="ChEBI" id="CHEBI:15378"/>
        <dbReference type="ChEBI" id="CHEBI:73682"/>
        <dbReference type="ChEBI" id="CHEBI:74411"/>
        <dbReference type="ChEBI" id="CHEBI:74418"/>
        <dbReference type="ChEBI" id="CHEBI:456215"/>
        <dbReference type="EC" id="2.3.1.234"/>
    </reaction>
</comment>
<comment type="cofactor">
    <cofactor evidence="1">
        <name>Fe(2+)</name>
        <dbReference type="ChEBI" id="CHEBI:29033"/>
    </cofactor>
    <text evidence="1">Binds 1 Fe(2+) ion per subunit.</text>
</comment>
<comment type="subcellular location">
    <subcellularLocation>
        <location evidence="1">Cytoplasm</location>
    </subcellularLocation>
</comment>
<comment type="similarity">
    <text evidence="1">Belongs to the KAE1 / TsaD family.</text>
</comment>
<keyword id="KW-0012">Acyltransferase</keyword>
<keyword id="KW-0963">Cytoplasm</keyword>
<keyword id="KW-0408">Iron</keyword>
<keyword id="KW-0479">Metal-binding</keyword>
<keyword id="KW-0808">Transferase</keyword>
<keyword id="KW-0819">tRNA processing</keyword>
<evidence type="ECO:0000255" key="1">
    <source>
        <dbReference type="HAMAP-Rule" id="MF_01445"/>
    </source>
</evidence>
<gene>
    <name evidence="1" type="primary">tsaD</name>
    <name type="synonym">gcp</name>
    <name type="ordered locus">SSU05_0166</name>
</gene>
<proteinExistence type="inferred from homology"/>
<protein>
    <recommendedName>
        <fullName evidence="1">tRNA N6-adenosine threonylcarbamoyltransferase</fullName>
        <ecNumber evidence="1">2.3.1.234</ecNumber>
    </recommendedName>
    <alternativeName>
        <fullName evidence="1">N6-L-threonylcarbamoyladenine synthase</fullName>
        <shortName evidence="1">t(6)A synthase</shortName>
    </alternativeName>
    <alternativeName>
        <fullName evidence="1">t(6)A37 threonylcarbamoyladenosine biosynthesis protein TsaD</fullName>
    </alternativeName>
    <alternativeName>
        <fullName evidence="1">tRNA threonylcarbamoyladenosine biosynthesis protein TsaD</fullName>
    </alternativeName>
</protein>
<name>TSAD_STRSY</name>
<reference key="1">
    <citation type="journal article" date="2007" name="PLoS ONE">
        <title>A glimpse of streptococcal toxic shock syndrome from comparative genomics of S. suis 2 Chinese isolates.</title>
        <authorList>
            <person name="Chen C."/>
            <person name="Tang J."/>
            <person name="Dong W."/>
            <person name="Wang C."/>
            <person name="Feng Y."/>
            <person name="Wang J."/>
            <person name="Zheng F."/>
            <person name="Pan X."/>
            <person name="Liu D."/>
            <person name="Li M."/>
            <person name="Song Y."/>
            <person name="Zhu X."/>
            <person name="Sun H."/>
            <person name="Feng T."/>
            <person name="Guo Z."/>
            <person name="Ju A."/>
            <person name="Ge J."/>
            <person name="Dong Y."/>
            <person name="Sun W."/>
            <person name="Jiang Y."/>
            <person name="Wang J."/>
            <person name="Yan J."/>
            <person name="Yang H."/>
            <person name="Wang X."/>
            <person name="Gao G.F."/>
            <person name="Yang R."/>
            <person name="Wang J."/>
            <person name="Yu J."/>
        </authorList>
    </citation>
    <scope>NUCLEOTIDE SEQUENCE [LARGE SCALE GENOMIC DNA]</scope>
    <source>
        <strain>05ZYH33</strain>
    </source>
</reference>
<dbReference type="EC" id="2.3.1.234" evidence="1"/>
<dbReference type="EMBL" id="CP000407">
    <property type="protein sequence ID" value="ABP89136.1"/>
    <property type="molecule type" value="Genomic_DNA"/>
</dbReference>
<dbReference type="SMR" id="A4VSP7"/>
<dbReference type="STRING" id="391295.SSU05_0166"/>
<dbReference type="KEGG" id="ssu:SSU05_0166"/>
<dbReference type="eggNOG" id="COG0533">
    <property type="taxonomic scope" value="Bacteria"/>
</dbReference>
<dbReference type="HOGENOM" id="CLU_023208_0_1_9"/>
<dbReference type="GO" id="GO:0005737">
    <property type="term" value="C:cytoplasm"/>
    <property type="evidence" value="ECO:0007669"/>
    <property type="project" value="UniProtKB-SubCell"/>
</dbReference>
<dbReference type="GO" id="GO:0005506">
    <property type="term" value="F:iron ion binding"/>
    <property type="evidence" value="ECO:0007669"/>
    <property type="project" value="UniProtKB-UniRule"/>
</dbReference>
<dbReference type="GO" id="GO:0061711">
    <property type="term" value="F:N(6)-L-threonylcarbamoyladenine synthase activity"/>
    <property type="evidence" value="ECO:0007669"/>
    <property type="project" value="UniProtKB-EC"/>
</dbReference>
<dbReference type="GO" id="GO:0002949">
    <property type="term" value="P:tRNA threonylcarbamoyladenosine modification"/>
    <property type="evidence" value="ECO:0007669"/>
    <property type="project" value="UniProtKB-UniRule"/>
</dbReference>
<dbReference type="CDD" id="cd24133">
    <property type="entry name" value="ASKHA_NBD_TsaD_bac"/>
    <property type="match status" value="1"/>
</dbReference>
<dbReference type="FunFam" id="3.30.420.40:FF:000012">
    <property type="entry name" value="tRNA N6-adenosine threonylcarbamoyltransferase"/>
    <property type="match status" value="1"/>
</dbReference>
<dbReference type="FunFam" id="3.30.420.40:FF:000040">
    <property type="entry name" value="tRNA N6-adenosine threonylcarbamoyltransferase"/>
    <property type="match status" value="1"/>
</dbReference>
<dbReference type="Gene3D" id="3.30.420.40">
    <property type="match status" value="2"/>
</dbReference>
<dbReference type="HAMAP" id="MF_01445">
    <property type="entry name" value="TsaD"/>
    <property type="match status" value="1"/>
</dbReference>
<dbReference type="InterPro" id="IPR043129">
    <property type="entry name" value="ATPase_NBD"/>
</dbReference>
<dbReference type="InterPro" id="IPR000905">
    <property type="entry name" value="Gcp-like_dom"/>
</dbReference>
<dbReference type="InterPro" id="IPR017861">
    <property type="entry name" value="KAE1/TsaD"/>
</dbReference>
<dbReference type="InterPro" id="IPR022450">
    <property type="entry name" value="TsaD"/>
</dbReference>
<dbReference type="NCBIfam" id="TIGR00329">
    <property type="entry name" value="gcp_kae1"/>
    <property type="match status" value="1"/>
</dbReference>
<dbReference type="NCBIfam" id="TIGR03723">
    <property type="entry name" value="T6A_TsaD_YgjD"/>
    <property type="match status" value="1"/>
</dbReference>
<dbReference type="PANTHER" id="PTHR11735">
    <property type="entry name" value="TRNA N6-ADENOSINE THREONYLCARBAMOYLTRANSFERASE"/>
    <property type="match status" value="1"/>
</dbReference>
<dbReference type="PANTHER" id="PTHR11735:SF6">
    <property type="entry name" value="TRNA N6-ADENOSINE THREONYLCARBAMOYLTRANSFERASE, MITOCHONDRIAL"/>
    <property type="match status" value="1"/>
</dbReference>
<dbReference type="Pfam" id="PF00814">
    <property type="entry name" value="TsaD"/>
    <property type="match status" value="1"/>
</dbReference>
<dbReference type="PRINTS" id="PR00789">
    <property type="entry name" value="OSIALOPTASE"/>
</dbReference>
<dbReference type="SUPFAM" id="SSF53067">
    <property type="entry name" value="Actin-like ATPase domain"/>
    <property type="match status" value="1"/>
</dbReference>
<sequence length="336" mass="35957">MMKDRLILAIETSCDETSVAVLRNDAELLSNVIASQIASHQRFGGVVPEVASRHHVEVITACIEEALLEAEVTAEDLTAVAVTYGPGLVGALLVGISAAKAFAWANGLPLIPVNHMAGHLMAARAVKELEFPLLALLVSGGHTELVYVSEAGDYKIVGETRDDAVGEAYDKVGRVMGLPYPAGRVIDELAHEGQDIYDFPRAMIKEDNLEFSFSGLKSAFINLYHNAQQKGETLSNADLSASFQACVMDILMAKTKKALEQYPVKTLVVAGGVAANQGLRERLAAEITDVEVIIPPLRLCGDNAGMIALAAVSEYNKENLAGWDLNAKPSLAFENL</sequence>
<organism>
    <name type="scientific">Streptococcus suis (strain 05ZYH33)</name>
    <dbReference type="NCBI Taxonomy" id="391295"/>
    <lineage>
        <taxon>Bacteria</taxon>
        <taxon>Bacillati</taxon>
        <taxon>Bacillota</taxon>
        <taxon>Bacilli</taxon>
        <taxon>Lactobacillales</taxon>
        <taxon>Streptococcaceae</taxon>
        <taxon>Streptococcus</taxon>
    </lineage>
</organism>
<accession>A4VSP7</accession>